<protein>
    <recommendedName>
        <fullName>ATR-interacting protein mus304</fullName>
    </recommendedName>
    <alternativeName>
        <fullName>Mutagen-sensitive protein 304</fullName>
    </alternativeName>
</protein>
<accession>Q9VVN4</accession>
<accession>B6UXA1</accession>
<accession>B6UXA5</accession>
<accession>B6UXA6</accession>
<accession>B6UXA7</accession>
<accession>B6UXA8</accession>
<accession>B6UXA9</accession>
<accession>B6UXB0</accession>
<accession>B6UXB1</accession>
<accession>B6UXB2</accession>
<accession>B6UXB3</accession>
<accession>B6UXB4</accession>
<accession>B6UXB5</accession>
<accession>B6UXB6</accession>
<accession>B6UXB7</accession>
<accession>B6UXB8</accession>
<accession>B6UXB9</accession>
<accession>B6UXC0</accession>
<accession>B6UXC1</accession>
<accession>B6UXC2</accession>
<accession>B6UXC3</accession>
<accession>B6UXC4</accession>
<accession>B6UXC5</accession>
<accession>B6UXC6</accession>
<accession>B6UXC7</accession>
<accession>B6UXC8</accession>
<accession>B6UXC9</accession>
<accession>B6UXD0</accession>
<accession>B6UXD1</accession>
<dbReference type="EMBL" id="AF224715">
    <property type="protein sequence ID" value="AAF43388.1"/>
    <property type="molecule type" value="mRNA"/>
</dbReference>
<dbReference type="EMBL" id="FJ219149">
    <property type="protein sequence ID" value="ACI96445.1"/>
    <property type="molecule type" value="Genomic_DNA"/>
</dbReference>
<dbReference type="EMBL" id="FJ219153">
    <property type="protein sequence ID" value="ACI96449.1"/>
    <property type="molecule type" value="Genomic_DNA"/>
</dbReference>
<dbReference type="EMBL" id="FJ219154">
    <property type="protein sequence ID" value="ACI96450.1"/>
    <property type="molecule type" value="Genomic_DNA"/>
</dbReference>
<dbReference type="EMBL" id="FJ219155">
    <property type="protein sequence ID" value="ACI96451.1"/>
    <property type="molecule type" value="Genomic_DNA"/>
</dbReference>
<dbReference type="EMBL" id="FJ219156">
    <property type="protein sequence ID" value="ACI96452.1"/>
    <property type="molecule type" value="Genomic_DNA"/>
</dbReference>
<dbReference type="EMBL" id="FJ219157">
    <property type="protein sequence ID" value="ACI96453.1"/>
    <property type="molecule type" value="Genomic_DNA"/>
</dbReference>
<dbReference type="EMBL" id="FJ219158">
    <property type="protein sequence ID" value="ACI96454.1"/>
    <property type="molecule type" value="Genomic_DNA"/>
</dbReference>
<dbReference type="EMBL" id="FJ219159">
    <property type="protein sequence ID" value="ACI96455.1"/>
    <property type="molecule type" value="Genomic_DNA"/>
</dbReference>
<dbReference type="EMBL" id="FJ219160">
    <property type="protein sequence ID" value="ACI96456.1"/>
    <property type="molecule type" value="Genomic_DNA"/>
</dbReference>
<dbReference type="EMBL" id="FJ219161">
    <property type="protein sequence ID" value="ACI96457.1"/>
    <property type="molecule type" value="Genomic_DNA"/>
</dbReference>
<dbReference type="EMBL" id="FJ219162">
    <property type="protein sequence ID" value="ACI96458.1"/>
    <property type="molecule type" value="Genomic_DNA"/>
</dbReference>
<dbReference type="EMBL" id="FJ219163">
    <property type="protein sequence ID" value="ACI96459.1"/>
    <property type="molecule type" value="Genomic_DNA"/>
</dbReference>
<dbReference type="EMBL" id="FJ219164">
    <property type="protein sequence ID" value="ACI96460.1"/>
    <property type="molecule type" value="Genomic_DNA"/>
</dbReference>
<dbReference type="EMBL" id="FJ219165">
    <property type="protein sequence ID" value="ACI96461.1"/>
    <property type="molecule type" value="Genomic_DNA"/>
</dbReference>
<dbReference type="EMBL" id="FJ219166">
    <property type="protein sequence ID" value="ACI96462.1"/>
    <property type="molecule type" value="Genomic_DNA"/>
</dbReference>
<dbReference type="EMBL" id="FJ219167">
    <property type="protein sequence ID" value="ACI96463.1"/>
    <property type="molecule type" value="Genomic_DNA"/>
</dbReference>
<dbReference type="EMBL" id="FJ219168">
    <property type="protein sequence ID" value="ACI96464.1"/>
    <property type="molecule type" value="Genomic_DNA"/>
</dbReference>
<dbReference type="EMBL" id="FJ219169">
    <property type="protein sequence ID" value="ACI96465.1"/>
    <property type="molecule type" value="Genomic_DNA"/>
</dbReference>
<dbReference type="EMBL" id="FJ219170">
    <property type="protein sequence ID" value="ACI96466.1"/>
    <property type="molecule type" value="Genomic_DNA"/>
</dbReference>
<dbReference type="EMBL" id="FJ219171">
    <property type="protein sequence ID" value="ACI96467.1"/>
    <property type="molecule type" value="Genomic_DNA"/>
</dbReference>
<dbReference type="EMBL" id="FJ219172">
    <property type="protein sequence ID" value="ACI96468.1"/>
    <property type="molecule type" value="Genomic_DNA"/>
</dbReference>
<dbReference type="EMBL" id="FJ219173">
    <property type="protein sequence ID" value="ACI96469.1"/>
    <property type="molecule type" value="Genomic_DNA"/>
</dbReference>
<dbReference type="EMBL" id="FJ219174">
    <property type="protein sequence ID" value="ACI96470.1"/>
    <property type="molecule type" value="Genomic_DNA"/>
</dbReference>
<dbReference type="EMBL" id="FJ219175">
    <property type="protein sequence ID" value="ACI96471.1"/>
    <property type="molecule type" value="Genomic_DNA"/>
</dbReference>
<dbReference type="EMBL" id="FJ219176">
    <property type="protein sequence ID" value="ACI96472.1"/>
    <property type="molecule type" value="Genomic_DNA"/>
</dbReference>
<dbReference type="EMBL" id="FJ219177">
    <property type="protein sequence ID" value="ACI96473.1"/>
    <property type="molecule type" value="Genomic_DNA"/>
</dbReference>
<dbReference type="EMBL" id="FJ219178">
    <property type="protein sequence ID" value="ACI96474.1"/>
    <property type="molecule type" value="Genomic_DNA"/>
</dbReference>
<dbReference type="EMBL" id="FJ219179">
    <property type="protein sequence ID" value="ACI96475.1"/>
    <property type="molecule type" value="Genomic_DNA"/>
</dbReference>
<dbReference type="EMBL" id="AE014296">
    <property type="protein sequence ID" value="AAF49277.2"/>
    <property type="molecule type" value="Genomic_DNA"/>
</dbReference>
<dbReference type="EMBL" id="AY118585">
    <property type="protein sequence ID" value="AAM49954.1"/>
    <property type="molecule type" value="mRNA"/>
</dbReference>
<dbReference type="RefSeq" id="NP_524135.3">
    <property type="nucleotide sequence ID" value="NM_079411.4"/>
</dbReference>
<dbReference type="SMR" id="Q9VVN4"/>
<dbReference type="BioGRID" id="65288">
    <property type="interactions" value="38"/>
</dbReference>
<dbReference type="FunCoup" id="Q9VVN4">
    <property type="interactions" value="122"/>
</dbReference>
<dbReference type="IntAct" id="Q9VVN4">
    <property type="interactions" value="4"/>
</dbReference>
<dbReference type="STRING" id="7227.FBpp0074888"/>
<dbReference type="PaxDb" id="7227-FBpp0074888"/>
<dbReference type="EnsemblMetazoa" id="FBtr0075122">
    <property type="protein sequence ID" value="FBpp0074888"/>
    <property type="gene ID" value="FBgn0002901"/>
</dbReference>
<dbReference type="GeneID" id="40003"/>
<dbReference type="KEGG" id="dme:Dmel_CG7347"/>
<dbReference type="AGR" id="FB:FBgn0002901"/>
<dbReference type="CTD" id="40003"/>
<dbReference type="FlyBase" id="FBgn0002901">
    <property type="gene designation" value="mus304"/>
</dbReference>
<dbReference type="VEuPathDB" id="VectorBase:FBgn0002901"/>
<dbReference type="eggNOG" id="ENOG502SDTQ">
    <property type="taxonomic scope" value="Eukaryota"/>
</dbReference>
<dbReference type="HOGENOM" id="CLU_335948_0_0_1"/>
<dbReference type="InParanoid" id="Q9VVN4"/>
<dbReference type="OMA" id="KSHFMLK"/>
<dbReference type="OrthoDB" id="7668655at2759"/>
<dbReference type="PhylomeDB" id="Q9VVN4"/>
<dbReference type="Reactome" id="R-DME-176187">
    <property type="pathway name" value="Activation of ATR in response to replication stress"/>
</dbReference>
<dbReference type="Reactome" id="R-DME-5693607">
    <property type="pathway name" value="Processing of DNA double-strand break ends"/>
</dbReference>
<dbReference type="Reactome" id="R-DME-6804756">
    <property type="pathway name" value="Regulation of TP53 Activity through Phosphorylation"/>
</dbReference>
<dbReference type="Reactome" id="R-DME-69473">
    <property type="pathway name" value="G2/M DNA damage checkpoint"/>
</dbReference>
<dbReference type="SignaLink" id="Q9VVN4"/>
<dbReference type="BioGRID-ORCS" id="40003">
    <property type="hits" value="0 hits in 1 CRISPR screen"/>
</dbReference>
<dbReference type="GenomeRNAi" id="40003"/>
<dbReference type="PRO" id="PR:Q9VVN4"/>
<dbReference type="Proteomes" id="UP000000803">
    <property type="component" value="Chromosome 3L"/>
</dbReference>
<dbReference type="Bgee" id="FBgn0002901">
    <property type="expression patterns" value="Expressed in egg cell and 24 other cell types or tissues"/>
</dbReference>
<dbReference type="GO" id="GO:0005737">
    <property type="term" value="C:cytoplasm"/>
    <property type="evidence" value="ECO:0000314"/>
    <property type="project" value="FlyBase"/>
</dbReference>
<dbReference type="GO" id="GO:0000077">
    <property type="term" value="P:DNA damage checkpoint signaling"/>
    <property type="evidence" value="ECO:0000315"/>
    <property type="project" value="FlyBase"/>
</dbReference>
<dbReference type="GO" id="GO:0006281">
    <property type="term" value="P:DNA repair"/>
    <property type="evidence" value="ECO:0000315"/>
    <property type="project" value="FlyBase"/>
</dbReference>
<dbReference type="GO" id="GO:0016321">
    <property type="term" value="P:female meiosis chromosome segregation"/>
    <property type="evidence" value="ECO:0000315"/>
    <property type="project" value="FlyBase"/>
</dbReference>
<dbReference type="GO" id="GO:0007143">
    <property type="term" value="P:female meiotic nuclear division"/>
    <property type="evidence" value="ECO:0000315"/>
    <property type="project" value="FlyBase"/>
</dbReference>
<dbReference type="GO" id="GO:0007444">
    <property type="term" value="P:imaginal disc development"/>
    <property type="evidence" value="ECO:0000304"/>
    <property type="project" value="FlyBase"/>
</dbReference>
<dbReference type="GO" id="GO:0033314">
    <property type="term" value="P:mitotic DNA replication checkpoint signaling"/>
    <property type="evidence" value="ECO:0000315"/>
    <property type="project" value="FlyBase"/>
</dbReference>
<dbReference type="GO" id="GO:0007131">
    <property type="term" value="P:reciprocal meiotic recombination"/>
    <property type="evidence" value="ECO:0000315"/>
    <property type="project" value="FlyBase"/>
</dbReference>
<dbReference type="GO" id="GO:0007348">
    <property type="term" value="P:regulation of syncytial blastoderm mitotic cell cycle"/>
    <property type="evidence" value="ECO:0000315"/>
    <property type="project" value="FlyBase"/>
</dbReference>
<dbReference type="GO" id="GO:0009314">
    <property type="term" value="P:response to radiation"/>
    <property type="evidence" value="ECO:0000304"/>
    <property type="project" value="FlyBase"/>
</dbReference>
<dbReference type="GO" id="GO:0000723">
    <property type="term" value="P:telomere maintenance"/>
    <property type="evidence" value="ECO:0000316"/>
    <property type="project" value="FlyBase"/>
</dbReference>
<dbReference type="InterPro" id="IPR033349">
    <property type="entry name" value="ATRIP"/>
</dbReference>
<dbReference type="PANTHER" id="PTHR28594">
    <property type="entry name" value="ATR-INTERACTING PROTEIN"/>
    <property type="match status" value="1"/>
</dbReference>
<dbReference type="PANTHER" id="PTHR28594:SF1">
    <property type="entry name" value="ATR-INTERACTING PROTEIN"/>
    <property type="match status" value="1"/>
</dbReference>
<gene>
    <name type="primary">mus304</name>
    <name type="ORF">CG7347</name>
</gene>
<proteinExistence type="evidence at protein level"/>
<feature type="chain" id="PRO_0000226819" description="ATR-interacting protein mus304">
    <location>
        <begin position="1"/>
        <end position="846"/>
    </location>
</feature>
<feature type="region of interest" description="Disordered" evidence="3">
    <location>
        <begin position="20"/>
        <end position="40"/>
    </location>
</feature>
<feature type="region of interest" description="Disordered" evidence="3">
    <location>
        <begin position="90"/>
        <end position="109"/>
    </location>
</feature>
<feature type="region of interest" description="Disordered" evidence="3">
    <location>
        <begin position="135"/>
        <end position="162"/>
    </location>
</feature>
<feature type="region of interest" description="Disordered" evidence="3">
    <location>
        <begin position="651"/>
        <end position="681"/>
    </location>
</feature>
<feature type="coiled-coil region" evidence="2">
    <location>
        <begin position="168"/>
        <end position="240"/>
    </location>
</feature>
<feature type="coiled-coil region" evidence="2">
    <location>
        <begin position="327"/>
        <end position="359"/>
    </location>
</feature>
<feature type="short sequence motif" description="EEXXXDL motif">
    <location>
        <begin position="504"/>
        <end position="510"/>
    </location>
</feature>
<feature type="compositionally biased region" description="Low complexity" evidence="3">
    <location>
        <begin position="144"/>
        <end position="162"/>
    </location>
</feature>
<feature type="compositionally biased region" description="Low complexity" evidence="3">
    <location>
        <begin position="655"/>
        <end position="676"/>
    </location>
</feature>
<feature type="sequence variant" description="In strain: MW56, NC335, NC336, NC362, NC740 and NC774." evidence="7">
    <original>A</original>
    <variation>T</variation>
    <location>
        <position position="28"/>
    </location>
</feature>
<feature type="sequence variant" description="In strain: MW38." evidence="7">
    <original>P</original>
    <variation>H</variation>
    <location>
        <position position="109"/>
    </location>
</feature>
<feature type="sequence variant" description="In strain: MW38." evidence="7">
    <original>M</original>
    <variation>L</variation>
    <location>
        <position position="132"/>
    </location>
</feature>
<feature type="sequence variant" description="In strain: MW27." evidence="7">
    <original>E</original>
    <variation>V</variation>
    <location>
        <position position="141"/>
    </location>
</feature>
<feature type="sequence variant" description="In strain: MW11, MW27, MW38, MW56, MW6, MW63, MW9, NC301, NC322, NC335, NC336, NC350, NC357, NC362, NC390, NC397, NC397, NC732, NC740 and NC774." evidence="7">
    <original>T</original>
    <variation>P</variation>
    <location>
        <position position="144"/>
    </location>
</feature>
<feature type="sequence variant" description="In strain: NC358." evidence="7">
    <original>T</original>
    <variation>I</variation>
    <location>
        <position position="151"/>
    </location>
</feature>
<feature type="sequence variant" description="In strain: MW9 and NC350." evidence="7">
    <original>Q</original>
    <variation>H</variation>
    <location>
        <position position="173"/>
    </location>
</feature>
<feature type="sequence variant" description="In strain: NC350." evidence="7">
    <original>D</original>
    <variation>N</variation>
    <location>
        <position position="244"/>
    </location>
</feature>
<feature type="sequence variant" description="In strain: MW11, MW27, MW6 and MW63." evidence="7">
    <original>M</original>
    <variation>I</variation>
    <location>
        <position position="284"/>
    </location>
</feature>
<feature type="sequence variant" description="In NC319, NC335 and NC399." evidence="7">
    <original>TDN</original>
    <variation>I</variation>
    <location>
        <begin position="320"/>
        <end position="322"/>
    </location>
</feature>
<feature type="sequence variant" description="In strain: MW38, MW9, NC319, NC335, NC336, NC359, NC362 and NC399." evidence="7">
    <original>D</original>
    <variation>E</variation>
    <location>
        <position position="333"/>
    </location>
</feature>
<feature type="sequence variant" description="In strain: MW38, MW9, NC319, NC335, NC336, NC359, NC362 and NC399." evidence="7">
    <original>H</original>
    <variation>N</variation>
    <location>
        <position position="341"/>
    </location>
</feature>
<feature type="sequence variant" description="In strain: NC304." evidence="7">
    <original>Q</original>
    <variation>L</variation>
    <location>
        <position position="357"/>
    </location>
</feature>
<feature type="sequence variant" description="In strain: MW56." evidence="7">
    <original>A</original>
    <variation>D</variation>
    <location>
        <position position="382"/>
    </location>
</feature>
<feature type="sequence variant" description="In strain: NC359 and NC740." evidence="7">
    <original>V</original>
    <variation>A</variation>
    <location>
        <position position="408"/>
    </location>
</feature>
<feature type="sequence variant" description="In strain: MW56." evidence="7">
    <original>H</original>
    <variation>Q</variation>
    <location>
        <position position="409"/>
    </location>
</feature>
<feature type="sequence variant" description="In strain: MW63 and NC306." evidence="7">
    <original>L</original>
    <variation>I</variation>
    <location>
        <position position="499"/>
    </location>
</feature>
<feature type="sequence variant" description="In strain: MW27." evidence="7">
    <original>P</original>
    <variation>H</variation>
    <location>
        <position position="549"/>
    </location>
</feature>
<feature type="sequence variant" description="In strain: MW11, MW27, MW38, MW6, MW9, NC303, NC304, NC306, NC322, NC335, NC336, NC350, NC390, NC397, NC732, NC740 and NC774." evidence="7">
    <original>F</original>
    <variation>Y</variation>
    <location>
        <position position="647"/>
    </location>
</feature>
<feature type="sequence variant" description="In strain: MW9." evidence="7">
    <location>
        <begin position="657"/>
        <end position="658"/>
    </location>
</feature>
<feature type="sequence variant" description="In strain: NC304, NC335, NC350, NC397, NC732 and MW9." evidence="7">
    <original>A</original>
    <variation>S</variation>
    <location>
        <position position="664"/>
    </location>
</feature>
<feature type="sequence variant" description="In strain: MW11, MW27, MW6, MW9 and NC774." evidence="7">
    <location>
        <begin position="668"/>
        <end position="669"/>
    </location>
</feature>
<feature type="sequence variant" description="In strain: MW9." evidence="7">
    <original>G</original>
    <variation>S</variation>
    <location>
        <position position="713"/>
    </location>
</feature>
<feature type="sequence variant" description="In strain: NC303, NC319 and NC361." evidence="7">
    <original>L</original>
    <variation>S</variation>
    <location>
        <position position="773"/>
    </location>
</feature>
<feature type="sequence variant" description="In strain: MW11, MW27, MW38, MW56, MW9, NC390 and NC740." evidence="7">
    <original>A</original>
    <variation>T</variation>
    <location>
        <position position="793"/>
    </location>
</feature>
<feature type="sequence variant" description="In strain: MW11 and NC390." evidence="7">
    <original>L</original>
    <variation>F</variation>
    <location>
        <position position="802"/>
    </location>
</feature>
<feature type="sequence variant" description="In strain: MW6." evidence="7">
    <original>S</original>
    <variation>T</variation>
    <location>
        <position position="803"/>
    </location>
</feature>
<feature type="sequence variant" description="In strain: MW6." evidence="7">
    <original>S</original>
    <variation>P</variation>
    <location>
        <position position="820"/>
    </location>
</feature>
<feature type="sequence variant" description="In strain: MW27, MW38, MW56, MW63, MW9, NC304, NC322, NC335, NC336, NC357, NC358, NC362, NC397, NC399, NC732 and NC774." evidence="7">
    <original>N</original>
    <variation>D</variation>
    <location>
        <position position="831"/>
    </location>
</feature>
<feature type="mutagenesis site" description="In mus304-4; induces abnormal bristle morphology, decreased meiotic recombination and arrested embryonic development." evidence="4">
    <original>G</original>
    <variation>E</variation>
    <location>
        <position position="600"/>
    </location>
</feature>
<feature type="mutagenesis site" description="In mus304-3; induces abnormal bristle morphology, decreased meiotic recombination and arrested embryonic development." evidence="4">
    <original>V</original>
    <variation>E</variation>
    <location>
        <position position="695"/>
    </location>
</feature>
<feature type="mutagenesis site" description="In mus304-6; induces abnormal bristle morphology, decreased meiotic recombination and arrested embryonic development." evidence="4">
    <original>G</original>
    <variation>D</variation>
    <location>
        <position position="718"/>
    </location>
</feature>
<evidence type="ECO:0000250" key="1"/>
<evidence type="ECO:0000255" key="2"/>
<evidence type="ECO:0000256" key="3">
    <source>
        <dbReference type="SAM" id="MobiDB-lite"/>
    </source>
</evidence>
<evidence type="ECO:0000269" key="4">
    <source>
    </source>
</evidence>
<evidence type="ECO:0000269" key="5">
    <source>
    </source>
</evidence>
<evidence type="ECO:0000269" key="6">
    <source>
    </source>
</evidence>
<evidence type="ECO:0000269" key="7">
    <source>
    </source>
</evidence>
<evidence type="ECO:0000305" key="8"/>
<comment type="function">
    <text evidence="4 5">DNA damage checkpoint protein required for chromosome break repair and for genomic stability during development.</text>
</comment>
<comment type="subunit">
    <text evidence="6">Interacts with ATR/mei-41.</text>
</comment>
<comment type="subcellular location">
    <subcellularLocation>
        <location evidence="4">Cytoplasm</location>
    </subcellularLocation>
</comment>
<comment type="tissue specificity">
    <text evidence="4">Highly expressed in the oocyte and nurse cells from stage 5 onward and in embryos prior to during nuclear division 14. Then, it decreases to background levels during interphase 14. Weakly or not expressed in stage embryos and imaginal disks.</text>
</comment>
<comment type="developmental stage">
    <text evidence="4">Expressed both maternally and zygotically.</text>
</comment>
<comment type="domain">
    <text evidence="1">The EEXXXDDL motif is required for the interaction with ATR/mei-41.</text>
</comment>
<comment type="similarity">
    <text evidence="8">Belongs to the ATRIP family.</text>
</comment>
<keyword id="KW-0175">Coiled coil</keyword>
<keyword id="KW-0963">Cytoplasm</keyword>
<keyword id="KW-0227">DNA damage</keyword>
<keyword id="KW-0234">DNA repair</keyword>
<keyword id="KW-1185">Reference proteome</keyword>
<reference key="1">
    <citation type="journal article" date="2000" name="Genes Dev.">
        <title>mus304 encodes a novel DNA damage checkpoint protein required during Drosophila development.</title>
        <authorList>
            <person name="Brodsky M.H."/>
            <person name="Sekelsky J.J."/>
            <person name="Tsang G."/>
            <person name="Hawley R.S."/>
            <person name="Rubin G.M."/>
        </authorList>
    </citation>
    <scope>NUCLEOTIDE SEQUENCE [MRNA]</scope>
    <scope>FUNCTION</scope>
    <scope>SUBCELLULAR LOCATION</scope>
    <scope>TISSUE SPECIFICITY</scope>
    <scope>DEVELOPMENTAL STAGE</scope>
    <scope>MUTAGENESIS OF GLY-600; VAL-695 AND GLY-718</scope>
    <source>
        <tissue>Embryo</tissue>
    </source>
</reference>
<reference key="2">
    <citation type="journal article" date="2009" name="Genetics">
        <title>Molecular population genetics and evolution of Drosophila meiosis genes.</title>
        <authorList>
            <person name="Anderson J.A."/>
            <person name="Gilliland W.D."/>
            <person name="Langley C.H."/>
        </authorList>
    </citation>
    <scope>NUCLEOTIDE SEQUENCE [GENOMIC DNA]</scope>
    <scope>VARIANTS THR-28; HIS-109; LEU-132; VAL-141; PRO-144; ILE-151; HIS-173; ASN-244; ILE-284; 320-THR--ASN-322 DELINS ILE; GLU-333; ASN-341; LEU-357; ASP-382; ALA-408; GLN-409; ILE-499; HIS-549; TYR-647; 657-VAL-SER-658 DEL; SER-664; 668-ASN-PRO-669 DEL; SER-713; SER-773; THR-793; PHE-802; THR-803; PRO-820 AND ASP-831</scope>
    <source>
        <strain>MW11</strain>
        <strain>MW27</strain>
        <strain>MW38</strain>
        <strain>MW56</strain>
        <strain>MW6</strain>
        <strain>MW63</strain>
        <strain>MW9</strain>
        <strain>NC301</strain>
        <strain>NC303</strain>
        <strain>NC304</strain>
        <strain>NC306</strain>
        <strain>NC319</strain>
        <strain>NC322</strain>
        <strain>NC335</strain>
        <strain>NC336</strain>
        <strain>NC350</strain>
        <strain>NC357</strain>
        <strain>NC358</strain>
        <strain>NC359</strain>
        <strain>NC361</strain>
        <strain>NC362</strain>
        <strain>NC375</strain>
        <strain>NC390</strain>
        <strain>NC397</strain>
        <strain>NC399</strain>
        <strain>NC732</strain>
        <strain>NC740</strain>
        <strain>NC774</strain>
    </source>
</reference>
<reference key="3">
    <citation type="journal article" date="2000" name="Science">
        <title>The genome sequence of Drosophila melanogaster.</title>
        <authorList>
            <person name="Adams M.D."/>
            <person name="Celniker S.E."/>
            <person name="Holt R.A."/>
            <person name="Evans C.A."/>
            <person name="Gocayne J.D."/>
            <person name="Amanatides P.G."/>
            <person name="Scherer S.E."/>
            <person name="Li P.W."/>
            <person name="Hoskins R.A."/>
            <person name="Galle R.F."/>
            <person name="George R.A."/>
            <person name="Lewis S.E."/>
            <person name="Richards S."/>
            <person name="Ashburner M."/>
            <person name="Henderson S.N."/>
            <person name="Sutton G.G."/>
            <person name="Wortman J.R."/>
            <person name="Yandell M.D."/>
            <person name="Zhang Q."/>
            <person name="Chen L.X."/>
            <person name="Brandon R.C."/>
            <person name="Rogers Y.-H.C."/>
            <person name="Blazej R.G."/>
            <person name="Champe M."/>
            <person name="Pfeiffer B.D."/>
            <person name="Wan K.H."/>
            <person name="Doyle C."/>
            <person name="Baxter E.G."/>
            <person name="Helt G."/>
            <person name="Nelson C.R."/>
            <person name="Miklos G.L.G."/>
            <person name="Abril J.F."/>
            <person name="Agbayani A."/>
            <person name="An H.-J."/>
            <person name="Andrews-Pfannkoch C."/>
            <person name="Baldwin D."/>
            <person name="Ballew R.M."/>
            <person name="Basu A."/>
            <person name="Baxendale J."/>
            <person name="Bayraktaroglu L."/>
            <person name="Beasley E.M."/>
            <person name="Beeson K.Y."/>
            <person name="Benos P.V."/>
            <person name="Berman B.P."/>
            <person name="Bhandari D."/>
            <person name="Bolshakov S."/>
            <person name="Borkova D."/>
            <person name="Botchan M.R."/>
            <person name="Bouck J."/>
            <person name="Brokstein P."/>
            <person name="Brottier P."/>
            <person name="Burtis K.C."/>
            <person name="Busam D.A."/>
            <person name="Butler H."/>
            <person name="Cadieu E."/>
            <person name="Center A."/>
            <person name="Chandra I."/>
            <person name="Cherry J.M."/>
            <person name="Cawley S."/>
            <person name="Dahlke C."/>
            <person name="Davenport L.B."/>
            <person name="Davies P."/>
            <person name="de Pablos B."/>
            <person name="Delcher A."/>
            <person name="Deng Z."/>
            <person name="Mays A.D."/>
            <person name="Dew I."/>
            <person name="Dietz S.M."/>
            <person name="Dodson K."/>
            <person name="Doup L.E."/>
            <person name="Downes M."/>
            <person name="Dugan-Rocha S."/>
            <person name="Dunkov B.C."/>
            <person name="Dunn P."/>
            <person name="Durbin K.J."/>
            <person name="Evangelista C.C."/>
            <person name="Ferraz C."/>
            <person name="Ferriera S."/>
            <person name="Fleischmann W."/>
            <person name="Fosler C."/>
            <person name="Gabrielian A.E."/>
            <person name="Garg N.S."/>
            <person name="Gelbart W.M."/>
            <person name="Glasser K."/>
            <person name="Glodek A."/>
            <person name="Gong F."/>
            <person name="Gorrell J.H."/>
            <person name="Gu Z."/>
            <person name="Guan P."/>
            <person name="Harris M."/>
            <person name="Harris N.L."/>
            <person name="Harvey D.A."/>
            <person name="Heiman T.J."/>
            <person name="Hernandez J.R."/>
            <person name="Houck J."/>
            <person name="Hostin D."/>
            <person name="Houston K.A."/>
            <person name="Howland T.J."/>
            <person name="Wei M.-H."/>
            <person name="Ibegwam C."/>
            <person name="Jalali M."/>
            <person name="Kalush F."/>
            <person name="Karpen G.H."/>
            <person name="Ke Z."/>
            <person name="Kennison J.A."/>
            <person name="Ketchum K.A."/>
            <person name="Kimmel B.E."/>
            <person name="Kodira C.D."/>
            <person name="Kraft C.L."/>
            <person name="Kravitz S."/>
            <person name="Kulp D."/>
            <person name="Lai Z."/>
            <person name="Lasko P."/>
            <person name="Lei Y."/>
            <person name="Levitsky A.A."/>
            <person name="Li J.H."/>
            <person name="Li Z."/>
            <person name="Liang Y."/>
            <person name="Lin X."/>
            <person name="Liu X."/>
            <person name="Mattei B."/>
            <person name="McIntosh T.C."/>
            <person name="McLeod M.P."/>
            <person name="McPherson D."/>
            <person name="Merkulov G."/>
            <person name="Milshina N.V."/>
            <person name="Mobarry C."/>
            <person name="Morris J."/>
            <person name="Moshrefi A."/>
            <person name="Mount S.M."/>
            <person name="Moy M."/>
            <person name="Murphy B."/>
            <person name="Murphy L."/>
            <person name="Muzny D.M."/>
            <person name="Nelson D.L."/>
            <person name="Nelson D.R."/>
            <person name="Nelson K.A."/>
            <person name="Nixon K."/>
            <person name="Nusskern D.R."/>
            <person name="Pacleb J.M."/>
            <person name="Palazzolo M."/>
            <person name="Pittman G.S."/>
            <person name="Pan S."/>
            <person name="Pollard J."/>
            <person name="Puri V."/>
            <person name="Reese M.G."/>
            <person name="Reinert K."/>
            <person name="Remington K."/>
            <person name="Saunders R.D.C."/>
            <person name="Scheeler F."/>
            <person name="Shen H."/>
            <person name="Shue B.C."/>
            <person name="Siden-Kiamos I."/>
            <person name="Simpson M."/>
            <person name="Skupski M.P."/>
            <person name="Smith T.J."/>
            <person name="Spier E."/>
            <person name="Spradling A.C."/>
            <person name="Stapleton M."/>
            <person name="Strong R."/>
            <person name="Sun E."/>
            <person name="Svirskas R."/>
            <person name="Tector C."/>
            <person name="Turner R."/>
            <person name="Venter E."/>
            <person name="Wang A.H."/>
            <person name="Wang X."/>
            <person name="Wang Z.-Y."/>
            <person name="Wassarman D.A."/>
            <person name="Weinstock G.M."/>
            <person name="Weissenbach J."/>
            <person name="Williams S.M."/>
            <person name="Woodage T."/>
            <person name="Worley K.C."/>
            <person name="Wu D."/>
            <person name="Yang S."/>
            <person name="Yao Q.A."/>
            <person name="Ye J."/>
            <person name="Yeh R.-F."/>
            <person name="Zaveri J.S."/>
            <person name="Zhan M."/>
            <person name="Zhang G."/>
            <person name="Zhao Q."/>
            <person name="Zheng L."/>
            <person name="Zheng X.H."/>
            <person name="Zhong F.N."/>
            <person name="Zhong W."/>
            <person name="Zhou X."/>
            <person name="Zhu S.C."/>
            <person name="Zhu X."/>
            <person name="Smith H.O."/>
            <person name="Gibbs R.A."/>
            <person name="Myers E.W."/>
            <person name="Rubin G.M."/>
            <person name="Venter J.C."/>
        </authorList>
    </citation>
    <scope>NUCLEOTIDE SEQUENCE [LARGE SCALE GENOMIC DNA]</scope>
    <source>
        <strain>Berkeley</strain>
    </source>
</reference>
<reference key="4">
    <citation type="journal article" date="2002" name="Genome Biol.">
        <title>Annotation of the Drosophila melanogaster euchromatic genome: a systematic review.</title>
        <authorList>
            <person name="Misra S."/>
            <person name="Crosby M.A."/>
            <person name="Mungall C.J."/>
            <person name="Matthews B.B."/>
            <person name="Campbell K.S."/>
            <person name="Hradecky P."/>
            <person name="Huang Y."/>
            <person name="Kaminker J.S."/>
            <person name="Millburn G.H."/>
            <person name="Prochnik S.E."/>
            <person name="Smith C.D."/>
            <person name="Tupy J.L."/>
            <person name="Whitfield E.J."/>
            <person name="Bayraktaroglu L."/>
            <person name="Berman B.P."/>
            <person name="Bettencourt B.R."/>
            <person name="Celniker S.E."/>
            <person name="de Grey A.D.N.J."/>
            <person name="Drysdale R.A."/>
            <person name="Harris N.L."/>
            <person name="Richter J."/>
            <person name="Russo S."/>
            <person name="Schroeder A.J."/>
            <person name="Shu S.Q."/>
            <person name="Stapleton M."/>
            <person name="Yamada C."/>
            <person name="Ashburner M."/>
            <person name="Gelbart W.M."/>
            <person name="Rubin G.M."/>
            <person name="Lewis S.E."/>
        </authorList>
    </citation>
    <scope>GENOME REANNOTATION</scope>
    <source>
        <strain>Berkeley</strain>
    </source>
</reference>
<reference key="5">
    <citation type="journal article" date="2002" name="Genome Biol.">
        <title>A Drosophila full-length cDNA resource.</title>
        <authorList>
            <person name="Stapleton M."/>
            <person name="Carlson J.W."/>
            <person name="Brokstein P."/>
            <person name="Yu C."/>
            <person name="Champe M."/>
            <person name="George R.A."/>
            <person name="Guarin H."/>
            <person name="Kronmiller B."/>
            <person name="Pacleb J.M."/>
            <person name="Park S."/>
            <person name="Wan K.H."/>
            <person name="Rubin G.M."/>
            <person name="Celniker S.E."/>
        </authorList>
    </citation>
    <scope>NUCLEOTIDE SEQUENCE [LARGE SCALE MRNA]</scope>
    <source>
        <strain>Berkeley</strain>
        <tissue>Embryo</tissue>
    </source>
</reference>
<reference key="6">
    <citation type="journal article" date="2002" name="Curr. Biol.">
        <title>Activation of a meiotic checkpoint during Drosophila oogenesis regulates the translation of Gurken through Chk2/Mnk.</title>
        <authorList>
            <person name="Abdu U."/>
            <person name="Brodsky M."/>
            <person name="Schuepbach T."/>
        </authorList>
    </citation>
    <scope>FUNCTION</scope>
</reference>
<reference key="7">
    <citation type="journal article" date="2004" name="Mol. Cell. Biol.">
        <title>Drosophila melanogaster MNK/Chk2 and p53 regulate multiple DNA repair and apoptotic pathways following DNA damage.</title>
        <authorList>
            <person name="Brodsky M.H."/>
            <person name="Weinert B.T."/>
            <person name="Tsang G."/>
            <person name="Rong Y.S."/>
            <person name="McGinnis N.M."/>
            <person name="Golic K.G."/>
            <person name="Rio D.C."/>
            <person name="Rubin G.M."/>
        </authorList>
    </citation>
    <scope>INTERACTION WITH MEI-41</scope>
</reference>
<sequence>MAKRFSAMKDFARCKKPRLDVSVTRGSARPSPPRNNFDGILWDDDDDVILMATQLAEAEIEAEERKKKGGTEVDIGNSEVTFSEFAPTFQGSTSTQQMFPPPPPPQKKPTSLDMDAIFADDDDFDFLAVTLMDSEPQKMPEPKTSTSRITTSSISVQQKTTTTTTINATQSRQQEHQLKFLMDRIEALKRENAQLEKNLGDSKERNEIKSGEVSLLRDELKHLRQQLQASKMEKLALADETNRDCNKKVAEAAKQIAAKDIELKIKNAEFSKLKTQQKAHERSMNSSMSILQAAPDPLEKRLSLRLNRLNIHRSVPGLKTDNGSVFEYSENEDQTKKRRNHFELELKQLLLHYARLQAKPESVDNLLPRILSSVGKVFTEFASYAQSLDFPHNCMLYPYNPHNLEEEVHRISLTHQSCLYDNEKAVPLRRFIATLALICRREERISRGLTEWKENDLGLLDMAIEAITKLGFSYEVGQHFGLLEALTSLLNSLLQENALLQHNEELLFDLLKQLVFTRPSPWVFAELSSCFLSCLRHPQLMDKMCVNSPKDCFVSDRVRSVYRFGPDSCLLQVYAGLLELCFFSETPLRQDYFQLLLKIGGNHVRFAFECFKNPPDFILEMLPYFADDGDEDSSDGTLMKTGTSLSFNSTGAVQGSVSNGSTSASVSNPNQNSNSSTTQRGKGCECYVKLCLSAVTIVFQVMHQWMLHSRKAGTEEVGEISRIAVHLLSLVFHEYYLTCLFRDSEETTKHYLSLICNWWSEHANLLGFQSIHLRLLNQLVKAHFMLKPLHLEAKPNNPVNDLSEWKRIVKNADDQRAVKSAVTVDPSKLLNTDFFSALKREENTFE</sequence>
<organism>
    <name type="scientific">Drosophila melanogaster</name>
    <name type="common">Fruit fly</name>
    <dbReference type="NCBI Taxonomy" id="7227"/>
    <lineage>
        <taxon>Eukaryota</taxon>
        <taxon>Metazoa</taxon>
        <taxon>Ecdysozoa</taxon>
        <taxon>Arthropoda</taxon>
        <taxon>Hexapoda</taxon>
        <taxon>Insecta</taxon>
        <taxon>Pterygota</taxon>
        <taxon>Neoptera</taxon>
        <taxon>Endopterygota</taxon>
        <taxon>Diptera</taxon>
        <taxon>Brachycera</taxon>
        <taxon>Muscomorpha</taxon>
        <taxon>Ephydroidea</taxon>
        <taxon>Drosophilidae</taxon>
        <taxon>Drosophila</taxon>
        <taxon>Sophophora</taxon>
    </lineage>
</organism>
<name>ATRIP_DROME</name>